<name>RIMP_VESOH</name>
<gene>
    <name evidence="1" type="primary">rimP</name>
    <name type="ordered locus">COSY_0057</name>
</gene>
<evidence type="ECO:0000255" key="1">
    <source>
        <dbReference type="HAMAP-Rule" id="MF_01077"/>
    </source>
</evidence>
<accession>A5CXX4</accession>
<dbReference type="EMBL" id="AP009247">
    <property type="protein sequence ID" value="BAF61194.1"/>
    <property type="molecule type" value="Genomic_DNA"/>
</dbReference>
<dbReference type="RefSeq" id="WP_011929464.1">
    <property type="nucleotide sequence ID" value="NC_009465.1"/>
</dbReference>
<dbReference type="SMR" id="A5CXX4"/>
<dbReference type="STRING" id="412965.COSY_0057"/>
<dbReference type="KEGG" id="vok:COSY_0057"/>
<dbReference type="eggNOG" id="COG0779">
    <property type="taxonomic scope" value="Bacteria"/>
</dbReference>
<dbReference type="HOGENOM" id="CLU_070525_2_0_6"/>
<dbReference type="OrthoDB" id="9805006at2"/>
<dbReference type="Proteomes" id="UP000000247">
    <property type="component" value="Chromosome"/>
</dbReference>
<dbReference type="GO" id="GO:0005829">
    <property type="term" value="C:cytosol"/>
    <property type="evidence" value="ECO:0007669"/>
    <property type="project" value="TreeGrafter"/>
</dbReference>
<dbReference type="GO" id="GO:0000028">
    <property type="term" value="P:ribosomal small subunit assembly"/>
    <property type="evidence" value="ECO:0007669"/>
    <property type="project" value="TreeGrafter"/>
</dbReference>
<dbReference type="GO" id="GO:0006412">
    <property type="term" value="P:translation"/>
    <property type="evidence" value="ECO:0007669"/>
    <property type="project" value="TreeGrafter"/>
</dbReference>
<dbReference type="CDD" id="cd01734">
    <property type="entry name" value="YlxS_C"/>
    <property type="match status" value="1"/>
</dbReference>
<dbReference type="FunFam" id="3.30.300.70:FF:000001">
    <property type="entry name" value="Ribosome maturation factor RimP"/>
    <property type="match status" value="1"/>
</dbReference>
<dbReference type="Gene3D" id="3.30.300.70">
    <property type="entry name" value="RimP-like superfamily, N-terminal"/>
    <property type="match status" value="1"/>
</dbReference>
<dbReference type="HAMAP" id="MF_01077">
    <property type="entry name" value="RimP"/>
    <property type="match status" value="1"/>
</dbReference>
<dbReference type="InterPro" id="IPR003728">
    <property type="entry name" value="Ribosome_maturation_RimP"/>
</dbReference>
<dbReference type="InterPro" id="IPR028998">
    <property type="entry name" value="RimP_C"/>
</dbReference>
<dbReference type="InterPro" id="IPR036847">
    <property type="entry name" value="RimP_C_sf"/>
</dbReference>
<dbReference type="InterPro" id="IPR028989">
    <property type="entry name" value="RimP_N"/>
</dbReference>
<dbReference type="InterPro" id="IPR035956">
    <property type="entry name" value="RimP_N_sf"/>
</dbReference>
<dbReference type="NCBIfam" id="NF000927">
    <property type="entry name" value="PRK00092.1-1"/>
    <property type="match status" value="1"/>
</dbReference>
<dbReference type="PANTHER" id="PTHR33867">
    <property type="entry name" value="RIBOSOME MATURATION FACTOR RIMP"/>
    <property type="match status" value="1"/>
</dbReference>
<dbReference type="PANTHER" id="PTHR33867:SF1">
    <property type="entry name" value="RIBOSOME MATURATION FACTOR RIMP"/>
    <property type="match status" value="1"/>
</dbReference>
<dbReference type="Pfam" id="PF17384">
    <property type="entry name" value="DUF150_C"/>
    <property type="match status" value="1"/>
</dbReference>
<dbReference type="Pfam" id="PF02576">
    <property type="entry name" value="RimP_N"/>
    <property type="match status" value="1"/>
</dbReference>
<dbReference type="SUPFAM" id="SSF74942">
    <property type="entry name" value="YhbC-like, C-terminal domain"/>
    <property type="match status" value="1"/>
</dbReference>
<dbReference type="SUPFAM" id="SSF75420">
    <property type="entry name" value="YhbC-like, N-terminal domain"/>
    <property type="match status" value="1"/>
</dbReference>
<sequence>MARVTDKITHLIKPVIEGMGYELLGIEYVASGKYSILRIFIDTNKSISVNDCEIVSRQLSSIFDIEEPISGQYNLEVSSPGIERPLFHKGHYQCFLGFNVKLHMFRPISGQSNFFGVIGSVSEINNTIELVGELGAIILDIDLIKKANLVVDF</sequence>
<reference key="1">
    <citation type="journal article" date="2007" name="Curr. Biol.">
        <title>Reduced genome of the thioautotrophic intracellular symbiont in a deep-sea clam, Calyptogena okutanii.</title>
        <authorList>
            <person name="Kuwahara H."/>
            <person name="Yoshida T."/>
            <person name="Takaki Y."/>
            <person name="Shimamura S."/>
            <person name="Nishi S."/>
            <person name="Harada M."/>
            <person name="Matsuyama K."/>
            <person name="Takishita K."/>
            <person name="Kawato M."/>
            <person name="Uematsu K."/>
            <person name="Fujiwara Y."/>
            <person name="Sato T."/>
            <person name="Kato C."/>
            <person name="Kitagawa M."/>
            <person name="Kato I."/>
            <person name="Maruyama T."/>
        </authorList>
    </citation>
    <scope>NUCLEOTIDE SEQUENCE [LARGE SCALE GENOMIC DNA]</scope>
    <source>
        <strain>HA</strain>
    </source>
</reference>
<comment type="function">
    <text evidence="1">Required for maturation of 30S ribosomal subunits.</text>
</comment>
<comment type="subcellular location">
    <subcellularLocation>
        <location evidence="1">Cytoplasm</location>
    </subcellularLocation>
</comment>
<comment type="similarity">
    <text evidence="1">Belongs to the RimP family.</text>
</comment>
<protein>
    <recommendedName>
        <fullName evidence="1">Ribosome maturation factor RimP</fullName>
    </recommendedName>
</protein>
<proteinExistence type="inferred from homology"/>
<organism>
    <name type="scientific">Vesicomyosocius okutanii subsp. Calyptogena okutanii (strain HA)</name>
    <dbReference type="NCBI Taxonomy" id="412965"/>
    <lineage>
        <taxon>Bacteria</taxon>
        <taxon>Pseudomonadati</taxon>
        <taxon>Pseudomonadota</taxon>
        <taxon>Gammaproteobacteria</taxon>
        <taxon>Candidatus Pseudothioglobaceae</taxon>
        <taxon>Candidatus Vesicomyosocius</taxon>
    </lineage>
</organism>
<feature type="chain" id="PRO_1000064795" description="Ribosome maturation factor RimP">
    <location>
        <begin position="1"/>
        <end position="153"/>
    </location>
</feature>
<keyword id="KW-0963">Cytoplasm</keyword>
<keyword id="KW-1185">Reference proteome</keyword>
<keyword id="KW-0690">Ribosome biogenesis</keyword>